<keyword id="KW-0028">Amino-acid biosynthesis</keyword>
<keyword id="KW-0067">ATP-binding</keyword>
<keyword id="KW-0963">Cytoplasm</keyword>
<keyword id="KW-0418">Kinase</keyword>
<keyword id="KW-0547">Nucleotide-binding</keyword>
<keyword id="KW-0641">Proline biosynthesis</keyword>
<keyword id="KW-0808">Transferase</keyword>
<protein>
    <recommendedName>
        <fullName evidence="1">Glutamate 5-kinase</fullName>
        <ecNumber evidence="1">2.7.2.11</ecNumber>
    </recommendedName>
    <alternativeName>
        <fullName evidence="1">Gamma-glutamyl kinase</fullName>
        <shortName evidence="1">GK</shortName>
    </alternativeName>
</protein>
<evidence type="ECO:0000255" key="1">
    <source>
        <dbReference type="HAMAP-Rule" id="MF_00456"/>
    </source>
</evidence>
<organism>
    <name type="scientific">Ralstonia pickettii (strain 12J)</name>
    <dbReference type="NCBI Taxonomy" id="402626"/>
    <lineage>
        <taxon>Bacteria</taxon>
        <taxon>Pseudomonadati</taxon>
        <taxon>Pseudomonadota</taxon>
        <taxon>Betaproteobacteria</taxon>
        <taxon>Burkholderiales</taxon>
        <taxon>Burkholderiaceae</taxon>
        <taxon>Ralstonia</taxon>
    </lineage>
</organism>
<gene>
    <name evidence="1" type="primary">proB</name>
    <name type="ordered locus">Rpic_3064</name>
</gene>
<comment type="function">
    <text evidence="1">Catalyzes the transfer of a phosphate group to glutamate to form L-glutamate 5-phosphate.</text>
</comment>
<comment type="catalytic activity">
    <reaction evidence="1">
        <text>L-glutamate + ATP = L-glutamyl 5-phosphate + ADP</text>
        <dbReference type="Rhea" id="RHEA:14877"/>
        <dbReference type="ChEBI" id="CHEBI:29985"/>
        <dbReference type="ChEBI" id="CHEBI:30616"/>
        <dbReference type="ChEBI" id="CHEBI:58274"/>
        <dbReference type="ChEBI" id="CHEBI:456216"/>
        <dbReference type="EC" id="2.7.2.11"/>
    </reaction>
</comment>
<comment type="pathway">
    <text evidence="1">Amino-acid biosynthesis; L-proline biosynthesis; L-glutamate 5-semialdehyde from L-glutamate: step 1/2.</text>
</comment>
<comment type="subcellular location">
    <subcellularLocation>
        <location evidence="1">Cytoplasm</location>
    </subcellularLocation>
</comment>
<comment type="similarity">
    <text evidence="1">Belongs to the glutamate 5-kinase family.</text>
</comment>
<feature type="chain" id="PRO_1000125251" description="Glutamate 5-kinase">
    <location>
        <begin position="1"/>
        <end position="374"/>
    </location>
</feature>
<feature type="domain" description="PUA" evidence="1">
    <location>
        <begin position="282"/>
        <end position="360"/>
    </location>
</feature>
<feature type="binding site" evidence="1">
    <location>
        <position position="16"/>
    </location>
    <ligand>
        <name>ATP</name>
        <dbReference type="ChEBI" id="CHEBI:30616"/>
    </ligand>
</feature>
<feature type="binding site" evidence="1">
    <location>
        <position position="56"/>
    </location>
    <ligand>
        <name>substrate</name>
    </ligand>
</feature>
<feature type="binding site" evidence="1">
    <location>
        <position position="143"/>
    </location>
    <ligand>
        <name>substrate</name>
    </ligand>
</feature>
<feature type="binding site" evidence="1">
    <location>
        <position position="155"/>
    </location>
    <ligand>
        <name>substrate</name>
    </ligand>
</feature>
<feature type="binding site" evidence="1">
    <location>
        <begin position="175"/>
        <end position="176"/>
    </location>
    <ligand>
        <name>ATP</name>
        <dbReference type="ChEBI" id="CHEBI:30616"/>
    </ligand>
</feature>
<name>PROB_RALPJ</name>
<dbReference type="EC" id="2.7.2.11" evidence="1"/>
<dbReference type="EMBL" id="CP001068">
    <property type="protein sequence ID" value="ACD28187.1"/>
    <property type="molecule type" value="Genomic_DNA"/>
</dbReference>
<dbReference type="SMR" id="B2UCV2"/>
<dbReference type="STRING" id="402626.Rpic_3064"/>
<dbReference type="KEGG" id="rpi:Rpic_3064"/>
<dbReference type="eggNOG" id="COG0263">
    <property type="taxonomic scope" value="Bacteria"/>
</dbReference>
<dbReference type="HOGENOM" id="CLU_025400_2_0_4"/>
<dbReference type="UniPathway" id="UPA00098">
    <property type="reaction ID" value="UER00359"/>
</dbReference>
<dbReference type="GO" id="GO:0005829">
    <property type="term" value="C:cytosol"/>
    <property type="evidence" value="ECO:0007669"/>
    <property type="project" value="TreeGrafter"/>
</dbReference>
<dbReference type="GO" id="GO:0005524">
    <property type="term" value="F:ATP binding"/>
    <property type="evidence" value="ECO:0007669"/>
    <property type="project" value="UniProtKB-KW"/>
</dbReference>
<dbReference type="GO" id="GO:0004349">
    <property type="term" value="F:glutamate 5-kinase activity"/>
    <property type="evidence" value="ECO:0007669"/>
    <property type="project" value="UniProtKB-UniRule"/>
</dbReference>
<dbReference type="GO" id="GO:0003723">
    <property type="term" value="F:RNA binding"/>
    <property type="evidence" value="ECO:0007669"/>
    <property type="project" value="InterPro"/>
</dbReference>
<dbReference type="GO" id="GO:0055129">
    <property type="term" value="P:L-proline biosynthetic process"/>
    <property type="evidence" value="ECO:0007669"/>
    <property type="project" value="UniProtKB-UniRule"/>
</dbReference>
<dbReference type="CDD" id="cd04242">
    <property type="entry name" value="AAK_G5K_ProB"/>
    <property type="match status" value="1"/>
</dbReference>
<dbReference type="CDD" id="cd21157">
    <property type="entry name" value="PUA_G5K"/>
    <property type="match status" value="1"/>
</dbReference>
<dbReference type="FunFam" id="2.30.130.10:FF:000007">
    <property type="entry name" value="Glutamate 5-kinase"/>
    <property type="match status" value="1"/>
</dbReference>
<dbReference type="FunFam" id="3.40.1160.10:FF:000018">
    <property type="entry name" value="Glutamate 5-kinase"/>
    <property type="match status" value="1"/>
</dbReference>
<dbReference type="Gene3D" id="3.40.1160.10">
    <property type="entry name" value="Acetylglutamate kinase-like"/>
    <property type="match status" value="1"/>
</dbReference>
<dbReference type="Gene3D" id="2.30.130.10">
    <property type="entry name" value="PUA domain"/>
    <property type="match status" value="1"/>
</dbReference>
<dbReference type="HAMAP" id="MF_00456">
    <property type="entry name" value="ProB"/>
    <property type="match status" value="1"/>
</dbReference>
<dbReference type="InterPro" id="IPR036393">
    <property type="entry name" value="AceGlu_kinase-like_sf"/>
</dbReference>
<dbReference type="InterPro" id="IPR001048">
    <property type="entry name" value="Asp/Glu/Uridylate_kinase"/>
</dbReference>
<dbReference type="InterPro" id="IPR041739">
    <property type="entry name" value="G5K_ProB"/>
</dbReference>
<dbReference type="InterPro" id="IPR001057">
    <property type="entry name" value="Glu/AcGlu_kinase"/>
</dbReference>
<dbReference type="InterPro" id="IPR011529">
    <property type="entry name" value="Glu_5kinase"/>
</dbReference>
<dbReference type="InterPro" id="IPR005715">
    <property type="entry name" value="Glu_5kinase/COase_Synthase"/>
</dbReference>
<dbReference type="InterPro" id="IPR019797">
    <property type="entry name" value="Glutamate_5-kinase_CS"/>
</dbReference>
<dbReference type="InterPro" id="IPR002478">
    <property type="entry name" value="PUA"/>
</dbReference>
<dbReference type="InterPro" id="IPR015947">
    <property type="entry name" value="PUA-like_sf"/>
</dbReference>
<dbReference type="InterPro" id="IPR036974">
    <property type="entry name" value="PUA_sf"/>
</dbReference>
<dbReference type="NCBIfam" id="TIGR01027">
    <property type="entry name" value="proB"/>
    <property type="match status" value="1"/>
</dbReference>
<dbReference type="PANTHER" id="PTHR43654">
    <property type="entry name" value="GLUTAMATE 5-KINASE"/>
    <property type="match status" value="1"/>
</dbReference>
<dbReference type="PANTHER" id="PTHR43654:SF1">
    <property type="entry name" value="ISOPENTENYL PHOSPHATE KINASE"/>
    <property type="match status" value="1"/>
</dbReference>
<dbReference type="Pfam" id="PF00696">
    <property type="entry name" value="AA_kinase"/>
    <property type="match status" value="1"/>
</dbReference>
<dbReference type="Pfam" id="PF01472">
    <property type="entry name" value="PUA"/>
    <property type="match status" value="1"/>
</dbReference>
<dbReference type="PIRSF" id="PIRSF000729">
    <property type="entry name" value="GK"/>
    <property type="match status" value="1"/>
</dbReference>
<dbReference type="PRINTS" id="PR00474">
    <property type="entry name" value="GLU5KINASE"/>
</dbReference>
<dbReference type="SMART" id="SM00359">
    <property type="entry name" value="PUA"/>
    <property type="match status" value="1"/>
</dbReference>
<dbReference type="SUPFAM" id="SSF53633">
    <property type="entry name" value="Carbamate kinase-like"/>
    <property type="match status" value="1"/>
</dbReference>
<dbReference type="SUPFAM" id="SSF88697">
    <property type="entry name" value="PUA domain-like"/>
    <property type="match status" value="1"/>
</dbReference>
<dbReference type="PROSITE" id="PS00902">
    <property type="entry name" value="GLUTAMATE_5_KINASE"/>
    <property type="match status" value="1"/>
</dbReference>
<dbReference type="PROSITE" id="PS50890">
    <property type="entry name" value="PUA"/>
    <property type="match status" value="1"/>
</dbReference>
<reference key="1">
    <citation type="submission" date="2008-05" db="EMBL/GenBank/DDBJ databases">
        <title>Complete sequence of chromosome 1 of Ralstonia pickettii 12J.</title>
        <authorList>
            <person name="Lucas S."/>
            <person name="Copeland A."/>
            <person name="Lapidus A."/>
            <person name="Glavina del Rio T."/>
            <person name="Dalin E."/>
            <person name="Tice H."/>
            <person name="Bruce D."/>
            <person name="Goodwin L."/>
            <person name="Pitluck S."/>
            <person name="Meincke L."/>
            <person name="Brettin T."/>
            <person name="Detter J.C."/>
            <person name="Han C."/>
            <person name="Kuske C.R."/>
            <person name="Schmutz J."/>
            <person name="Larimer F."/>
            <person name="Land M."/>
            <person name="Hauser L."/>
            <person name="Kyrpides N."/>
            <person name="Mikhailova N."/>
            <person name="Marsh T."/>
            <person name="Richardson P."/>
        </authorList>
    </citation>
    <scope>NUCLEOTIDE SEQUENCE [LARGE SCALE GENOMIC DNA]</scope>
    <source>
        <strain>12J</strain>
    </source>
</reference>
<sequence length="374" mass="39356">MALHSLIADARRLVVKVGSSLVTNDGRGLDQAAIARWAAQIAALRAAGKEVVLVSSGAIAEGMQRLGWAKRPKEIHELQAAAAVGQMGLAQVYESEFARHSIRTAQVLLTHGDLADRERYLNARSTLLTLLSLGVVPIINENDTVVTDEIKFGDNDTLGALVTNLIEGDALIILTDQRGLYTADPRKDPGARFVDEAQAGTPDLEQMAGGAGSSIGKGGMLTKILAAKRAAKSGAHTIIASGREADVLARLASGEAIGTQLRAPTGRMAARKQWMIDHLQLRGRVVLDAGAVEKLTAGGKSLLPIGVTEVQGEFARGEVISCVDAAGLEVARGLTNYSSAEARLIARKASSEIEAVLGYVSAAELVHRDNLVLL</sequence>
<proteinExistence type="inferred from homology"/>
<accession>B2UCV2</accession>